<name>PSBL_CUSOB</name>
<proteinExistence type="inferred from homology"/>
<feature type="chain" id="PRO_0000353255" description="Photosystem II reaction center protein L">
    <location>
        <begin position="1"/>
        <end position="39"/>
    </location>
</feature>
<feature type="transmembrane region" description="Helical" evidence="1">
    <location>
        <begin position="18"/>
        <end position="38"/>
    </location>
</feature>
<accession>A8W3J8</accession>
<organism>
    <name type="scientific">Cuscuta obtusiflora</name>
    <name type="common">Peruvian dodder</name>
    <dbReference type="NCBI Taxonomy" id="437280"/>
    <lineage>
        <taxon>Eukaryota</taxon>
        <taxon>Viridiplantae</taxon>
        <taxon>Streptophyta</taxon>
        <taxon>Embryophyta</taxon>
        <taxon>Tracheophyta</taxon>
        <taxon>Spermatophyta</taxon>
        <taxon>Magnoliopsida</taxon>
        <taxon>eudicotyledons</taxon>
        <taxon>Gunneridae</taxon>
        <taxon>Pentapetalae</taxon>
        <taxon>asterids</taxon>
        <taxon>lamiids</taxon>
        <taxon>Solanales</taxon>
        <taxon>Convolvulaceae</taxon>
        <taxon>Cuscuteae</taxon>
        <taxon>Cuscuta</taxon>
        <taxon>Cuscuta subgen. Grammica</taxon>
        <taxon>Cuscuta sect. Cleistogrammica</taxon>
    </lineage>
</organism>
<comment type="function">
    <text evidence="1">One of the components of the core complex of photosystem II (PSII). PSII is a light-driven water:plastoquinone oxidoreductase that uses light energy to abstract electrons from H(2)O, generating O(2) and a proton gradient subsequently used for ATP formation. It consists of a core antenna complex that captures photons, and an electron transfer chain that converts photonic excitation into a charge separation. This subunit is found at the monomer-monomer interface and is required for correct PSII assembly and/or dimerization.</text>
</comment>
<comment type="subunit">
    <text evidence="1">PSII is composed of 1 copy each of membrane proteins PsbA, PsbB, PsbC, PsbD, PsbE, PsbF, PsbH, PsbI, PsbJ, PsbK, PsbL, PsbM, PsbT, PsbX, PsbY, PsbZ, Psb30/Ycf12, at least 3 peripheral proteins of the oxygen-evolving complex and a large number of cofactors. It forms dimeric complexes.</text>
</comment>
<comment type="subcellular location">
    <subcellularLocation>
        <location evidence="2">Plastid membrane</location>
        <topology evidence="1">Single-pass membrane protein</topology>
    </subcellularLocation>
</comment>
<comment type="similarity">
    <text evidence="1">Belongs to the PsbL family.</text>
</comment>
<comment type="caution">
    <text evidence="2">Only inflorescences, fruits, starved seedlings and stressed stem tips are green in this organism.</text>
</comment>
<keyword id="KW-0472">Membrane</keyword>
<keyword id="KW-0602">Photosynthesis</keyword>
<keyword id="KW-0604">Photosystem II</keyword>
<keyword id="KW-0934">Plastid</keyword>
<keyword id="KW-0674">Reaction center</keyword>
<keyword id="KW-0812">Transmembrane</keyword>
<keyword id="KW-1133">Transmembrane helix</keyword>
<dbReference type="EMBL" id="EU189133">
    <property type="protein sequence ID" value="ABW20573.1"/>
    <property type="molecule type" value="Genomic_DNA"/>
</dbReference>
<dbReference type="RefSeq" id="YP_001531228.1">
    <property type="nucleotide sequence ID" value="NC_009949.1"/>
</dbReference>
<dbReference type="SMR" id="A8W3J8"/>
<dbReference type="GeneID" id="5714840"/>
<dbReference type="GO" id="GO:0009539">
    <property type="term" value="C:photosystem II reaction center"/>
    <property type="evidence" value="ECO:0007669"/>
    <property type="project" value="InterPro"/>
</dbReference>
<dbReference type="GO" id="GO:0042170">
    <property type="term" value="C:plastid membrane"/>
    <property type="evidence" value="ECO:0007669"/>
    <property type="project" value="UniProtKB-SubCell"/>
</dbReference>
<dbReference type="GO" id="GO:0042651">
    <property type="term" value="C:thylakoid membrane"/>
    <property type="evidence" value="ECO:0007669"/>
    <property type="project" value="UniProtKB-UniRule"/>
</dbReference>
<dbReference type="GO" id="GO:0015979">
    <property type="term" value="P:photosynthesis"/>
    <property type="evidence" value="ECO:0007669"/>
    <property type="project" value="UniProtKB-UniRule"/>
</dbReference>
<dbReference type="HAMAP" id="MF_01317">
    <property type="entry name" value="PSII_PsbL"/>
    <property type="match status" value="1"/>
</dbReference>
<dbReference type="InterPro" id="IPR003372">
    <property type="entry name" value="PSII_PsbL"/>
</dbReference>
<dbReference type="InterPro" id="IPR037266">
    <property type="entry name" value="PSII_PsbL_sf"/>
</dbReference>
<dbReference type="NCBIfam" id="NF001972">
    <property type="entry name" value="PRK00753.1"/>
    <property type="match status" value="1"/>
</dbReference>
<dbReference type="Pfam" id="PF02419">
    <property type="entry name" value="PsbL"/>
    <property type="match status" value="1"/>
</dbReference>
<dbReference type="SUPFAM" id="SSF161017">
    <property type="entry name" value="Photosystem II reaction center protein L, PsbL"/>
    <property type="match status" value="1"/>
</dbReference>
<gene>
    <name evidence="1" type="primary">psbL</name>
</gene>
<geneLocation type="plastid"/>
<sequence>MTQQSNPNEQTVELNRTSLYWGLLLIFVLAVLFSNYFFN</sequence>
<evidence type="ECO:0000255" key="1">
    <source>
        <dbReference type="HAMAP-Rule" id="MF_01317"/>
    </source>
</evidence>
<evidence type="ECO:0000305" key="2"/>
<reference key="1">
    <citation type="journal article" date="2007" name="BMC Plant Biol.">
        <title>Complete plastid genome sequences suggest strong selection for retention of photosynthetic genes in the parasitic plant genus Cuscuta.</title>
        <authorList>
            <person name="McNeal J.R."/>
            <person name="Kuehl J.V."/>
            <person name="Boore J.L."/>
            <person name="dePamphilis C.W."/>
        </authorList>
    </citation>
    <scope>NUCLEOTIDE SEQUENCE [LARGE SCALE GENOMIC DNA]</scope>
</reference>
<protein>
    <recommendedName>
        <fullName evidence="1">Photosystem II reaction center protein L</fullName>
        <shortName evidence="1">PSII-L</shortName>
    </recommendedName>
</protein>